<organism>
    <name type="scientific">Geotalea daltonii (strain DSM 22248 / JCM 15807 / FRC-32)</name>
    <name type="common">Geobacter daltonii</name>
    <dbReference type="NCBI Taxonomy" id="316067"/>
    <lineage>
        <taxon>Bacteria</taxon>
        <taxon>Pseudomonadati</taxon>
        <taxon>Thermodesulfobacteriota</taxon>
        <taxon>Desulfuromonadia</taxon>
        <taxon>Geobacterales</taxon>
        <taxon>Geobacteraceae</taxon>
        <taxon>Geotalea</taxon>
    </lineage>
</organism>
<feature type="chain" id="PRO_1000147407" description="UDP-N-acetylmuramoylalanine--D-glutamate ligase">
    <location>
        <begin position="1"/>
        <end position="453"/>
    </location>
</feature>
<feature type="binding site" evidence="1">
    <location>
        <begin position="115"/>
        <end position="121"/>
    </location>
    <ligand>
        <name>ATP</name>
        <dbReference type="ChEBI" id="CHEBI:30616"/>
    </ligand>
</feature>
<reference key="1">
    <citation type="submission" date="2009-01" db="EMBL/GenBank/DDBJ databases">
        <title>Complete sequence of Geobacter sp. FRC-32.</title>
        <authorList>
            <consortium name="US DOE Joint Genome Institute"/>
            <person name="Lucas S."/>
            <person name="Copeland A."/>
            <person name="Lapidus A."/>
            <person name="Glavina del Rio T."/>
            <person name="Dalin E."/>
            <person name="Tice H."/>
            <person name="Bruce D."/>
            <person name="Goodwin L."/>
            <person name="Pitluck S."/>
            <person name="Saunders E."/>
            <person name="Brettin T."/>
            <person name="Detter J.C."/>
            <person name="Han C."/>
            <person name="Larimer F."/>
            <person name="Land M."/>
            <person name="Hauser L."/>
            <person name="Kyrpides N."/>
            <person name="Ovchinnikova G."/>
            <person name="Kostka J."/>
            <person name="Richardson P."/>
        </authorList>
    </citation>
    <scope>NUCLEOTIDE SEQUENCE [LARGE SCALE GENOMIC DNA]</scope>
    <source>
        <strain>DSM 22248 / JCM 15807 / FRC-32</strain>
    </source>
</reference>
<evidence type="ECO:0000255" key="1">
    <source>
        <dbReference type="HAMAP-Rule" id="MF_00639"/>
    </source>
</evidence>
<protein>
    <recommendedName>
        <fullName evidence="1">UDP-N-acetylmuramoylalanine--D-glutamate ligase</fullName>
        <ecNumber evidence="1">6.3.2.9</ecNumber>
    </recommendedName>
    <alternativeName>
        <fullName evidence="1">D-glutamic acid-adding enzyme</fullName>
    </alternativeName>
    <alternativeName>
        <fullName evidence="1">UDP-N-acetylmuramoyl-L-alanyl-D-glutamate synthetase</fullName>
    </alternativeName>
</protein>
<dbReference type="EC" id="6.3.2.9" evidence="1"/>
<dbReference type="EMBL" id="CP001390">
    <property type="protein sequence ID" value="ACM19140.1"/>
    <property type="molecule type" value="Genomic_DNA"/>
</dbReference>
<dbReference type="RefSeq" id="WP_012645869.1">
    <property type="nucleotide sequence ID" value="NC_011979.1"/>
</dbReference>
<dbReference type="SMR" id="B9M170"/>
<dbReference type="STRING" id="316067.Geob_0778"/>
<dbReference type="KEGG" id="geo:Geob_0778"/>
<dbReference type="eggNOG" id="COG0771">
    <property type="taxonomic scope" value="Bacteria"/>
</dbReference>
<dbReference type="HOGENOM" id="CLU_032540_0_0_7"/>
<dbReference type="OrthoDB" id="9809796at2"/>
<dbReference type="UniPathway" id="UPA00219"/>
<dbReference type="Proteomes" id="UP000007721">
    <property type="component" value="Chromosome"/>
</dbReference>
<dbReference type="GO" id="GO:0005737">
    <property type="term" value="C:cytoplasm"/>
    <property type="evidence" value="ECO:0007669"/>
    <property type="project" value="UniProtKB-SubCell"/>
</dbReference>
<dbReference type="GO" id="GO:0005524">
    <property type="term" value="F:ATP binding"/>
    <property type="evidence" value="ECO:0007669"/>
    <property type="project" value="UniProtKB-UniRule"/>
</dbReference>
<dbReference type="GO" id="GO:0008764">
    <property type="term" value="F:UDP-N-acetylmuramoylalanine-D-glutamate ligase activity"/>
    <property type="evidence" value="ECO:0007669"/>
    <property type="project" value="UniProtKB-UniRule"/>
</dbReference>
<dbReference type="GO" id="GO:0051301">
    <property type="term" value="P:cell division"/>
    <property type="evidence" value="ECO:0007669"/>
    <property type="project" value="UniProtKB-KW"/>
</dbReference>
<dbReference type="GO" id="GO:0071555">
    <property type="term" value="P:cell wall organization"/>
    <property type="evidence" value="ECO:0007669"/>
    <property type="project" value="UniProtKB-KW"/>
</dbReference>
<dbReference type="GO" id="GO:0009252">
    <property type="term" value="P:peptidoglycan biosynthetic process"/>
    <property type="evidence" value="ECO:0007669"/>
    <property type="project" value="UniProtKB-UniRule"/>
</dbReference>
<dbReference type="GO" id="GO:0008360">
    <property type="term" value="P:regulation of cell shape"/>
    <property type="evidence" value="ECO:0007669"/>
    <property type="project" value="UniProtKB-KW"/>
</dbReference>
<dbReference type="Gene3D" id="3.90.190.20">
    <property type="entry name" value="Mur ligase, C-terminal domain"/>
    <property type="match status" value="1"/>
</dbReference>
<dbReference type="Gene3D" id="3.40.1190.10">
    <property type="entry name" value="Mur-like, catalytic domain"/>
    <property type="match status" value="1"/>
</dbReference>
<dbReference type="Gene3D" id="3.40.50.720">
    <property type="entry name" value="NAD(P)-binding Rossmann-like Domain"/>
    <property type="match status" value="1"/>
</dbReference>
<dbReference type="HAMAP" id="MF_00639">
    <property type="entry name" value="MurD"/>
    <property type="match status" value="1"/>
</dbReference>
<dbReference type="InterPro" id="IPR036565">
    <property type="entry name" value="Mur-like_cat_sf"/>
</dbReference>
<dbReference type="InterPro" id="IPR004101">
    <property type="entry name" value="Mur_ligase_C"/>
</dbReference>
<dbReference type="InterPro" id="IPR036615">
    <property type="entry name" value="Mur_ligase_C_dom_sf"/>
</dbReference>
<dbReference type="InterPro" id="IPR013221">
    <property type="entry name" value="Mur_ligase_cen"/>
</dbReference>
<dbReference type="InterPro" id="IPR005762">
    <property type="entry name" value="MurD"/>
</dbReference>
<dbReference type="NCBIfam" id="TIGR01087">
    <property type="entry name" value="murD"/>
    <property type="match status" value="1"/>
</dbReference>
<dbReference type="PANTHER" id="PTHR43692">
    <property type="entry name" value="UDP-N-ACETYLMURAMOYLALANINE--D-GLUTAMATE LIGASE"/>
    <property type="match status" value="1"/>
</dbReference>
<dbReference type="PANTHER" id="PTHR43692:SF1">
    <property type="entry name" value="UDP-N-ACETYLMURAMOYLALANINE--D-GLUTAMATE LIGASE"/>
    <property type="match status" value="1"/>
</dbReference>
<dbReference type="Pfam" id="PF02875">
    <property type="entry name" value="Mur_ligase_C"/>
    <property type="match status" value="1"/>
</dbReference>
<dbReference type="Pfam" id="PF08245">
    <property type="entry name" value="Mur_ligase_M"/>
    <property type="match status" value="1"/>
</dbReference>
<dbReference type="Pfam" id="PF21799">
    <property type="entry name" value="MurD-like_N"/>
    <property type="match status" value="1"/>
</dbReference>
<dbReference type="SUPFAM" id="SSF51984">
    <property type="entry name" value="MurCD N-terminal domain"/>
    <property type="match status" value="1"/>
</dbReference>
<dbReference type="SUPFAM" id="SSF53623">
    <property type="entry name" value="MurD-like peptide ligases, catalytic domain"/>
    <property type="match status" value="1"/>
</dbReference>
<dbReference type="SUPFAM" id="SSF53244">
    <property type="entry name" value="MurD-like peptide ligases, peptide-binding domain"/>
    <property type="match status" value="1"/>
</dbReference>
<keyword id="KW-0067">ATP-binding</keyword>
<keyword id="KW-0131">Cell cycle</keyword>
<keyword id="KW-0132">Cell division</keyword>
<keyword id="KW-0133">Cell shape</keyword>
<keyword id="KW-0961">Cell wall biogenesis/degradation</keyword>
<keyword id="KW-0963">Cytoplasm</keyword>
<keyword id="KW-0436">Ligase</keyword>
<keyword id="KW-0547">Nucleotide-binding</keyword>
<keyword id="KW-0573">Peptidoglycan synthesis</keyword>
<keyword id="KW-1185">Reference proteome</keyword>
<accession>B9M170</accession>
<comment type="function">
    <text evidence="1">Cell wall formation. Catalyzes the addition of glutamate to the nucleotide precursor UDP-N-acetylmuramoyl-L-alanine (UMA).</text>
</comment>
<comment type="catalytic activity">
    <reaction evidence="1">
        <text>UDP-N-acetyl-alpha-D-muramoyl-L-alanine + D-glutamate + ATP = UDP-N-acetyl-alpha-D-muramoyl-L-alanyl-D-glutamate + ADP + phosphate + H(+)</text>
        <dbReference type="Rhea" id="RHEA:16429"/>
        <dbReference type="ChEBI" id="CHEBI:15378"/>
        <dbReference type="ChEBI" id="CHEBI:29986"/>
        <dbReference type="ChEBI" id="CHEBI:30616"/>
        <dbReference type="ChEBI" id="CHEBI:43474"/>
        <dbReference type="ChEBI" id="CHEBI:83898"/>
        <dbReference type="ChEBI" id="CHEBI:83900"/>
        <dbReference type="ChEBI" id="CHEBI:456216"/>
        <dbReference type="EC" id="6.3.2.9"/>
    </reaction>
</comment>
<comment type="pathway">
    <text evidence="1">Cell wall biogenesis; peptidoglycan biosynthesis.</text>
</comment>
<comment type="subcellular location">
    <subcellularLocation>
        <location evidence="1">Cytoplasm</location>
    </subcellularLocation>
</comment>
<comment type="similarity">
    <text evidence="1">Belongs to the MurCDEF family.</text>
</comment>
<sequence length="453" mass="49170">MEIKGKKILVVGLARTGVAVARFLASRGAKVTVTDMKEESELADYLLQLEDLDLNLELGRHDKHTFLMSDLIVVSPGVPMDISPLLMAKAQRRVVISEIELAAAFIKAPMVAITGTNGKTTTTTLAGEIFKACGVETFVGGNIGNPLIELVTSGNDVAQVVVELSSFQLEGIQRFRPKVAVLLNITEDHLDRYASYQDYIDAKLRIFENQTVDDFAVLNVDDPLVAACAATVKSRVFPFSQRKELAEGIFCSKGIIVYRWQGSELRFDTAAFKLKGVHNIENIMAALASTLLSGADPIKAGRAVESFKGLRHRMEFIREVGGVAYYEDSKGTNVGSVVKSLESFDKGITLIAGGKDKGGSYAPLADLVRERVKHLILIGEAKERIEAELGNLTDTHKAATLEDAVAIAHRLAKAGEVVLFSPACSSFDMFKDYAERAERFNAAVRALAGGDCR</sequence>
<proteinExistence type="inferred from homology"/>
<gene>
    <name evidence="1" type="primary">murD</name>
    <name type="ordered locus">Geob_0778</name>
</gene>
<name>MURD_GEODF</name>